<evidence type="ECO:0000255" key="1">
    <source>
        <dbReference type="HAMAP-Rule" id="MF_00244"/>
    </source>
</evidence>
<comment type="function">
    <text evidence="1">Catalyzes the reversible adenylation of nicotinate mononucleotide (NaMN) to nicotinic acid adenine dinucleotide (NaAD).</text>
</comment>
<comment type="catalytic activity">
    <reaction evidence="1">
        <text>nicotinate beta-D-ribonucleotide + ATP + H(+) = deamido-NAD(+) + diphosphate</text>
        <dbReference type="Rhea" id="RHEA:22860"/>
        <dbReference type="ChEBI" id="CHEBI:15378"/>
        <dbReference type="ChEBI" id="CHEBI:30616"/>
        <dbReference type="ChEBI" id="CHEBI:33019"/>
        <dbReference type="ChEBI" id="CHEBI:57502"/>
        <dbReference type="ChEBI" id="CHEBI:58437"/>
        <dbReference type="EC" id="2.7.7.18"/>
    </reaction>
</comment>
<comment type="pathway">
    <text evidence="1">Cofactor biosynthesis; NAD(+) biosynthesis; deamido-NAD(+) from nicotinate D-ribonucleotide: step 1/1.</text>
</comment>
<comment type="similarity">
    <text evidence="1">Belongs to the NadD family.</text>
</comment>
<dbReference type="EC" id="2.7.7.18" evidence="1"/>
<dbReference type="EMBL" id="CR628336">
    <property type="protein sequence ID" value="CAH12450.1"/>
    <property type="molecule type" value="Genomic_DNA"/>
</dbReference>
<dbReference type="RefSeq" id="WP_011213645.1">
    <property type="nucleotide sequence ID" value="NC_006368.1"/>
</dbReference>
<dbReference type="SMR" id="Q5X5M1"/>
<dbReference type="KEGG" id="lpp:lpp1299"/>
<dbReference type="LegioList" id="lpp1299"/>
<dbReference type="HOGENOM" id="CLU_069765_0_0_6"/>
<dbReference type="UniPathway" id="UPA00253">
    <property type="reaction ID" value="UER00332"/>
</dbReference>
<dbReference type="GO" id="GO:0005524">
    <property type="term" value="F:ATP binding"/>
    <property type="evidence" value="ECO:0007669"/>
    <property type="project" value="UniProtKB-KW"/>
</dbReference>
<dbReference type="GO" id="GO:0004515">
    <property type="term" value="F:nicotinate-nucleotide adenylyltransferase activity"/>
    <property type="evidence" value="ECO:0007669"/>
    <property type="project" value="UniProtKB-UniRule"/>
</dbReference>
<dbReference type="GO" id="GO:0009435">
    <property type="term" value="P:NAD biosynthetic process"/>
    <property type="evidence" value="ECO:0007669"/>
    <property type="project" value="UniProtKB-UniRule"/>
</dbReference>
<dbReference type="CDD" id="cd02165">
    <property type="entry name" value="NMNAT"/>
    <property type="match status" value="1"/>
</dbReference>
<dbReference type="Gene3D" id="3.40.50.620">
    <property type="entry name" value="HUPs"/>
    <property type="match status" value="1"/>
</dbReference>
<dbReference type="HAMAP" id="MF_00244">
    <property type="entry name" value="NaMN_adenylyltr"/>
    <property type="match status" value="1"/>
</dbReference>
<dbReference type="InterPro" id="IPR004821">
    <property type="entry name" value="Cyt_trans-like"/>
</dbReference>
<dbReference type="InterPro" id="IPR005248">
    <property type="entry name" value="NadD/NMNAT"/>
</dbReference>
<dbReference type="InterPro" id="IPR014729">
    <property type="entry name" value="Rossmann-like_a/b/a_fold"/>
</dbReference>
<dbReference type="NCBIfam" id="TIGR00125">
    <property type="entry name" value="cyt_tran_rel"/>
    <property type="match status" value="1"/>
</dbReference>
<dbReference type="NCBIfam" id="TIGR00482">
    <property type="entry name" value="nicotinate (nicotinamide) nucleotide adenylyltransferase"/>
    <property type="match status" value="1"/>
</dbReference>
<dbReference type="NCBIfam" id="NF000839">
    <property type="entry name" value="PRK00071.1-1"/>
    <property type="match status" value="1"/>
</dbReference>
<dbReference type="PANTHER" id="PTHR39321">
    <property type="entry name" value="NICOTINATE-NUCLEOTIDE ADENYLYLTRANSFERASE-RELATED"/>
    <property type="match status" value="1"/>
</dbReference>
<dbReference type="PANTHER" id="PTHR39321:SF3">
    <property type="entry name" value="PHOSPHOPANTETHEINE ADENYLYLTRANSFERASE"/>
    <property type="match status" value="1"/>
</dbReference>
<dbReference type="Pfam" id="PF01467">
    <property type="entry name" value="CTP_transf_like"/>
    <property type="match status" value="1"/>
</dbReference>
<dbReference type="SUPFAM" id="SSF52374">
    <property type="entry name" value="Nucleotidylyl transferase"/>
    <property type="match status" value="1"/>
</dbReference>
<gene>
    <name evidence="1" type="primary">nadD</name>
    <name type="ordered locus">lpp1299</name>
</gene>
<feature type="chain" id="PRO_0000336702" description="Probable nicotinate-nucleotide adenylyltransferase">
    <location>
        <begin position="1"/>
        <end position="211"/>
    </location>
</feature>
<name>NADD_LEGPA</name>
<sequence>MHSIAIFGGTFDPVHNGHIKTSLAIQANFGFDSYYFLPCKSPAIKPPSFASSEQRVEMLKLALKPYPDFKIDTRELDRDTPSYMVYTLQSFRQEYTDSSLTLIIGYDGLLNLPQWYQWEKIISLANLLVINREEFFQQPVPKSVQTLLNQYRNDDKNILLNHHAGSICLYNAGHYDISSTKIREQLKQHKDVKSNLPDLVYDYIKKQELYQ</sequence>
<reference key="1">
    <citation type="journal article" date="2004" name="Nat. Genet.">
        <title>Evidence in the Legionella pneumophila genome for exploitation of host cell functions and high genome plasticity.</title>
        <authorList>
            <person name="Cazalet C."/>
            <person name="Rusniok C."/>
            <person name="Brueggemann H."/>
            <person name="Zidane N."/>
            <person name="Magnier A."/>
            <person name="Ma L."/>
            <person name="Tichit M."/>
            <person name="Jarraud S."/>
            <person name="Bouchier C."/>
            <person name="Vandenesch F."/>
            <person name="Kunst F."/>
            <person name="Etienne J."/>
            <person name="Glaser P."/>
            <person name="Buchrieser C."/>
        </authorList>
    </citation>
    <scope>NUCLEOTIDE SEQUENCE [LARGE SCALE GENOMIC DNA]</scope>
    <source>
        <strain>Paris</strain>
    </source>
</reference>
<protein>
    <recommendedName>
        <fullName evidence="1">Probable nicotinate-nucleotide adenylyltransferase</fullName>
        <ecNumber evidence="1">2.7.7.18</ecNumber>
    </recommendedName>
    <alternativeName>
        <fullName evidence="1">Deamido-NAD(+) diphosphorylase</fullName>
    </alternativeName>
    <alternativeName>
        <fullName evidence="1">Deamido-NAD(+) pyrophosphorylase</fullName>
    </alternativeName>
    <alternativeName>
        <fullName evidence="1">Nicotinate mononucleotide adenylyltransferase</fullName>
        <shortName evidence="1">NaMN adenylyltransferase</shortName>
    </alternativeName>
</protein>
<organism>
    <name type="scientific">Legionella pneumophila (strain Paris)</name>
    <dbReference type="NCBI Taxonomy" id="297246"/>
    <lineage>
        <taxon>Bacteria</taxon>
        <taxon>Pseudomonadati</taxon>
        <taxon>Pseudomonadota</taxon>
        <taxon>Gammaproteobacteria</taxon>
        <taxon>Legionellales</taxon>
        <taxon>Legionellaceae</taxon>
        <taxon>Legionella</taxon>
    </lineage>
</organism>
<keyword id="KW-0067">ATP-binding</keyword>
<keyword id="KW-0520">NAD</keyword>
<keyword id="KW-0547">Nucleotide-binding</keyword>
<keyword id="KW-0548">Nucleotidyltransferase</keyword>
<keyword id="KW-0662">Pyridine nucleotide biosynthesis</keyword>
<keyword id="KW-0808">Transferase</keyword>
<accession>Q5X5M1</accession>
<proteinExistence type="inferred from homology"/>